<gene>
    <name type="primary">MAK16</name>
    <name type="synonym">RBM13</name>
</gene>
<organism>
    <name type="scientific">Homo sapiens</name>
    <name type="common">Human</name>
    <dbReference type="NCBI Taxonomy" id="9606"/>
    <lineage>
        <taxon>Eukaryota</taxon>
        <taxon>Metazoa</taxon>
        <taxon>Chordata</taxon>
        <taxon>Craniata</taxon>
        <taxon>Vertebrata</taxon>
        <taxon>Euteleostomi</taxon>
        <taxon>Mammalia</taxon>
        <taxon>Eutheria</taxon>
        <taxon>Euarchontoglires</taxon>
        <taxon>Primates</taxon>
        <taxon>Haplorrhini</taxon>
        <taxon>Catarrhini</taxon>
        <taxon>Hominidae</taxon>
        <taxon>Homo</taxon>
    </lineage>
</organism>
<comment type="interaction">
    <interactant intactId="EBI-5280229">
        <id>Q9BXY0</id>
    </interactant>
    <interactant intactId="EBI-13213391">
        <id>Q96NE9-2</id>
        <label>FRMD6</label>
    </interactant>
    <organismsDiffer>false</organismsDiffer>
    <experiments>5</experiments>
</comment>
<comment type="interaction">
    <interactant intactId="EBI-5280229">
        <id>Q9BXY0</id>
    </interactant>
    <interactant intactId="EBI-821335">
        <id>Q9HAP6</id>
        <label>LIN7B</label>
    </interactant>
    <organismsDiffer>false</organismsDiffer>
    <experiments>3</experiments>
</comment>
<comment type="subcellular location">
    <subcellularLocation>
        <location evidence="2 3">Nucleus</location>
        <location evidence="2 3">Nucleolus</location>
    </subcellularLocation>
</comment>
<comment type="similarity">
    <text evidence="6">Belongs to the MAK16 family.</text>
</comment>
<sequence>MQSDDVIWDTLGNKQFCSFKIRTKTQSFCRNEYSLTGLCNRSSCPLANSQYATIKEEKGQCYLYMKVIERAAFPRRLWERVRLSKNYEKALEQIDENLIYWPRFIRHKCKQRFTKITQYLIRIRKLTLKRQRKLVPLSKKVERREKRREEKALIAAQLDNAIEKELLERLKQDTYGDIYNFPIHAFDKALEQQEAESDSSDTEEKDDDDDDEEDVGKREFVEDGEVDESDISDFEDMDKLDASSDEDQDGKSSSEEEEEKALSAKHKGKMPLRGPLQRKRAYVEIEYEQETEPVAKAKTT</sequence>
<dbReference type="EMBL" id="AF251062">
    <property type="protein sequence ID" value="AAK34952.1"/>
    <property type="molecule type" value="mRNA"/>
</dbReference>
<dbReference type="EMBL" id="AK027469">
    <property type="protein sequence ID" value="BAB55134.1"/>
    <property type="molecule type" value="mRNA"/>
</dbReference>
<dbReference type="EMBL" id="AK314491">
    <property type="protein sequence ID" value="BAG37091.1"/>
    <property type="molecule type" value="mRNA"/>
</dbReference>
<dbReference type="EMBL" id="CH471080">
    <property type="protein sequence ID" value="EAW63400.1"/>
    <property type="molecule type" value="Genomic_DNA"/>
</dbReference>
<dbReference type="EMBL" id="BC028230">
    <property type="protein sequence ID" value="AAH28230.1"/>
    <property type="molecule type" value="mRNA"/>
</dbReference>
<dbReference type="EMBL" id="BC039740">
    <property type="protein sequence ID" value="AAH39740.1"/>
    <property type="molecule type" value="mRNA"/>
</dbReference>
<dbReference type="EMBL" id="BC050528">
    <property type="protein sequence ID" value="AAH50528.1"/>
    <property type="molecule type" value="mRNA"/>
</dbReference>
<dbReference type="CCDS" id="CCDS6089.1"/>
<dbReference type="RefSeq" id="NP_115898.2">
    <property type="nucleotide sequence ID" value="NM_032509.3"/>
</dbReference>
<dbReference type="PDB" id="8FKP">
    <property type="method" value="EM"/>
    <property type="resolution" value="2.85 A"/>
    <property type="chains" value="NM=1-300"/>
</dbReference>
<dbReference type="PDB" id="8FKR">
    <property type="method" value="EM"/>
    <property type="resolution" value="2.89 A"/>
    <property type="chains" value="NM=1-300"/>
</dbReference>
<dbReference type="PDB" id="8FKT">
    <property type="method" value="EM"/>
    <property type="resolution" value="2.81 A"/>
    <property type="chains" value="NM=1-300"/>
</dbReference>
<dbReference type="PDB" id="8FKV">
    <property type="method" value="EM"/>
    <property type="resolution" value="2.47 A"/>
    <property type="chains" value="NM=1-300"/>
</dbReference>
<dbReference type="PDBsum" id="8FKP"/>
<dbReference type="PDBsum" id="8FKR"/>
<dbReference type="PDBsum" id="8FKT"/>
<dbReference type="PDBsum" id="8FKV"/>
<dbReference type="EMDB" id="EMD-29252"/>
<dbReference type="EMDB" id="EMD-29254"/>
<dbReference type="EMDB" id="EMD-29256"/>
<dbReference type="EMDB" id="EMD-29258"/>
<dbReference type="SMR" id="Q9BXY0"/>
<dbReference type="BioGRID" id="124134">
    <property type="interactions" value="181"/>
</dbReference>
<dbReference type="FunCoup" id="Q9BXY0">
    <property type="interactions" value="3090"/>
</dbReference>
<dbReference type="IntAct" id="Q9BXY0">
    <property type="interactions" value="133"/>
</dbReference>
<dbReference type="MINT" id="Q9BXY0"/>
<dbReference type="STRING" id="9606.ENSP00000353246"/>
<dbReference type="GlyGen" id="Q9BXY0">
    <property type="glycosylation" value="1 site, 1 O-linked glycan (1 site)"/>
</dbReference>
<dbReference type="iPTMnet" id="Q9BXY0"/>
<dbReference type="PhosphoSitePlus" id="Q9BXY0"/>
<dbReference type="SwissPalm" id="Q9BXY0"/>
<dbReference type="BioMuta" id="MAK16"/>
<dbReference type="DMDM" id="71152029"/>
<dbReference type="jPOST" id="Q9BXY0"/>
<dbReference type="MassIVE" id="Q9BXY0"/>
<dbReference type="PaxDb" id="9606-ENSP00000353246"/>
<dbReference type="PeptideAtlas" id="Q9BXY0"/>
<dbReference type="ProteomicsDB" id="79539"/>
<dbReference type="Pumba" id="Q9BXY0"/>
<dbReference type="Antibodypedia" id="23360">
    <property type="antibodies" value="54 antibodies from 18 providers"/>
</dbReference>
<dbReference type="DNASU" id="84549"/>
<dbReference type="Ensembl" id="ENST00000360128.11">
    <property type="protein sequence ID" value="ENSP00000353246.5"/>
    <property type="gene ID" value="ENSG00000198042.11"/>
</dbReference>
<dbReference type="GeneID" id="84549"/>
<dbReference type="KEGG" id="hsa:84549"/>
<dbReference type="MANE-Select" id="ENST00000360128.11">
    <property type="protein sequence ID" value="ENSP00000353246.5"/>
    <property type="RefSeq nucleotide sequence ID" value="NM_032509.4"/>
    <property type="RefSeq protein sequence ID" value="NP_115898.2"/>
</dbReference>
<dbReference type="UCSC" id="uc003xjj.4">
    <property type="organism name" value="human"/>
</dbReference>
<dbReference type="AGR" id="HGNC:13703"/>
<dbReference type="CTD" id="84549"/>
<dbReference type="DisGeNET" id="84549"/>
<dbReference type="GeneCards" id="MAK16"/>
<dbReference type="HGNC" id="HGNC:13703">
    <property type="gene designation" value="MAK16"/>
</dbReference>
<dbReference type="HPA" id="ENSG00000198042">
    <property type="expression patterns" value="Low tissue specificity"/>
</dbReference>
<dbReference type="MalaCards" id="MAK16"/>
<dbReference type="neXtProt" id="NX_Q9BXY0"/>
<dbReference type="OpenTargets" id="ENSG00000198042"/>
<dbReference type="PharmGKB" id="PA162394925"/>
<dbReference type="VEuPathDB" id="HostDB:ENSG00000198042"/>
<dbReference type="eggNOG" id="KOG3064">
    <property type="taxonomic scope" value="Eukaryota"/>
</dbReference>
<dbReference type="GeneTree" id="ENSGT00390000012859"/>
<dbReference type="HOGENOM" id="CLU_050888_2_0_1"/>
<dbReference type="InParanoid" id="Q9BXY0"/>
<dbReference type="OMA" id="DKGQNFC"/>
<dbReference type="OrthoDB" id="10251342at2759"/>
<dbReference type="PAN-GO" id="Q9BXY0">
    <property type="GO annotations" value="4 GO annotations based on evolutionary models"/>
</dbReference>
<dbReference type="PhylomeDB" id="Q9BXY0"/>
<dbReference type="TreeFam" id="TF105759"/>
<dbReference type="PathwayCommons" id="Q9BXY0"/>
<dbReference type="SignaLink" id="Q9BXY0"/>
<dbReference type="BioGRID-ORCS" id="84549">
    <property type="hits" value="838 hits in 1135 CRISPR screens"/>
</dbReference>
<dbReference type="CD-CODE" id="62EA6512">
    <property type="entry name" value="Sam68 nuclear body"/>
</dbReference>
<dbReference type="CD-CODE" id="91857CE7">
    <property type="entry name" value="Nucleolus"/>
</dbReference>
<dbReference type="ChiTaRS" id="MAK16">
    <property type="organism name" value="human"/>
</dbReference>
<dbReference type="GeneWiki" id="RBM13"/>
<dbReference type="GenomeRNAi" id="84549"/>
<dbReference type="Pharos" id="Q9BXY0">
    <property type="development level" value="Tdark"/>
</dbReference>
<dbReference type="PRO" id="PR:Q9BXY0"/>
<dbReference type="Proteomes" id="UP000005640">
    <property type="component" value="Chromosome 8"/>
</dbReference>
<dbReference type="RNAct" id="Q9BXY0">
    <property type="molecule type" value="protein"/>
</dbReference>
<dbReference type="Bgee" id="ENSG00000198042">
    <property type="expression patterns" value="Expressed in calcaneal tendon and 199 other cell types or tissues"/>
</dbReference>
<dbReference type="ExpressionAtlas" id="Q9BXY0">
    <property type="expression patterns" value="baseline and differential"/>
</dbReference>
<dbReference type="GO" id="GO:0043231">
    <property type="term" value="C:intracellular membrane-bounded organelle"/>
    <property type="evidence" value="ECO:0000314"/>
    <property type="project" value="HPA"/>
</dbReference>
<dbReference type="GO" id="GO:0005730">
    <property type="term" value="C:nucleolus"/>
    <property type="evidence" value="ECO:0000314"/>
    <property type="project" value="HPA"/>
</dbReference>
<dbReference type="GO" id="GO:0030687">
    <property type="term" value="C:preribosome, large subunit precursor"/>
    <property type="evidence" value="ECO:0000318"/>
    <property type="project" value="GO_Central"/>
</dbReference>
<dbReference type="GO" id="GO:0003723">
    <property type="term" value="F:RNA binding"/>
    <property type="evidence" value="ECO:0007005"/>
    <property type="project" value="UniProtKB"/>
</dbReference>
<dbReference type="GO" id="GO:0000460">
    <property type="term" value="P:maturation of 5.8S rRNA"/>
    <property type="evidence" value="ECO:0000318"/>
    <property type="project" value="GO_Central"/>
</dbReference>
<dbReference type="GO" id="GO:0000470">
    <property type="term" value="P:maturation of LSU-rRNA"/>
    <property type="evidence" value="ECO:0000318"/>
    <property type="project" value="GO_Central"/>
</dbReference>
<dbReference type="FunFam" id="3.30.390.110:FF:000003">
    <property type="entry name" value="Protein MAK16 homolog"/>
    <property type="match status" value="1"/>
</dbReference>
<dbReference type="Gene3D" id="3.30.390.110">
    <property type="match status" value="1"/>
</dbReference>
<dbReference type="InterPro" id="IPR006958">
    <property type="entry name" value="Mak16"/>
</dbReference>
<dbReference type="InterPro" id="IPR029004">
    <property type="entry name" value="Ribosomal_eL28/Mak16"/>
</dbReference>
<dbReference type="PANTHER" id="PTHR23405">
    <property type="entry name" value="MAINTENANCE OF KILLER 16 MAK16 PROTEIN-RELATED"/>
    <property type="match status" value="1"/>
</dbReference>
<dbReference type="PANTHER" id="PTHR23405:SF4">
    <property type="entry name" value="PROTEIN MAK16 HOMOLOG"/>
    <property type="match status" value="1"/>
</dbReference>
<dbReference type="Pfam" id="PF04874">
    <property type="entry name" value="Mak16"/>
    <property type="match status" value="1"/>
</dbReference>
<dbReference type="Pfam" id="PF01778">
    <property type="entry name" value="Ribosomal_L28e"/>
    <property type="match status" value="1"/>
</dbReference>
<dbReference type="PIRSF" id="PIRSF003352">
    <property type="entry name" value="MAK16"/>
    <property type="match status" value="1"/>
</dbReference>
<proteinExistence type="evidence at protein level"/>
<accession>Q9BXY0</accession>
<accession>B2RB44</accession>
<accession>Q5U5T1</accession>
<accession>Q86UC4</accession>
<accession>Q96SY6</accession>
<protein>
    <recommendedName>
        <fullName>Protein MAK16 homolog</fullName>
    </recommendedName>
    <alternativeName>
        <fullName>NNP78</fullName>
    </alternativeName>
    <alternativeName>
        <fullName>Protein RBM13</fullName>
    </alternativeName>
</protein>
<name>MAK16_HUMAN</name>
<evidence type="ECO:0000256" key="1">
    <source>
        <dbReference type="SAM" id="MobiDB-lite"/>
    </source>
</evidence>
<evidence type="ECO:0000269" key="2">
    <source>
    </source>
</evidence>
<evidence type="ECO:0000269" key="3">
    <source>
    </source>
</evidence>
<evidence type="ECO:0000269" key="4">
    <source>
    </source>
</evidence>
<evidence type="ECO:0000269" key="5">
    <source ref="1"/>
</evidence>
<evidence type="ECO:0000305" key="6"/>
<evidence type="ECO:0007744" key="7">
    <source>
    </source>
</evidence>
<evidence type="ECO:0007744" key="8">
    <source>
    </source>
</evidence>
<evidence type="ECO:0007744" key="9">
    <source>
    </source>
</evidence>
<evidence type="ECO:0007744" key="10">
    <source>
    </source>
</evidence>
<evidence type="ECO:0007744" key="11">
    <source>
    </source>
</evidence>
<evidence type="ECO:0007744" key="12">
    <source>
    </source>
</evidence>
<feature type="chain" id="PRO_0000203794" description="Protein MAK16 homolog">
    <location>
        <begin position="1"/>
        <end position="300"/>
    </location>
</feature>
<feature type="region of interest" description="Disordered" evidence="1">
    <location>
        <begin position="191"/>
        <end position="278"/>
    </location>
</feature>
<feature type="compositionally biased region" description="Acidic residues" evidence="1">
    <location>
        <begin position="193"/>
        <end position="214"/>
    </location>
</feature>
<feature type="compositionally biased region" description="Acidic residues" evidence="1">
    <location>
        <begin position="222"/>
        <end position="236"/>
    </location>
</feature>
<feature type="compositionally biased region" description="Basic residues" evidence="1">
    <location>
        <begin position="263"/>
        <end position="278"/>
    </location>
</feature>
<feature type="modified residue" description="N-acetylmethionine" evidence="8 11">
    <location>
        <position position="1"/>
    </location>
</feature>
<feature type="modified residue" description="Phosphoserine" evidence="10">
    <location>
        <position position="197"/>
    </location>
</feature>
<feature type="modified residue" description="Phosphoserine" evidence="10">
    <location>
        <position position="200"/>
    </location>
</feature>
<feature type="modified residue" description="Phosphoserine" evidence="7 9 10">
    <location>
        <position position="229"/>
    </location>
</feature>
<feature type="modified residue" description="Phosphoserine" evidence="7 9 10">
    <location>
        <position position="232"/>
    </location>
</feature>
<feature type="cross-link" description="Glycyl lysine isopeptide (Lys-Gly) (interchain with G-Cter in SUMO2)" evidence="12">
    <location>
        <position position="55"/>
    </location>
</feature>
<feature type="cross-link" description="Glycyl lysine isopeptide (Lys-Gly) (interchain with G-Cter in SUMO2)" evidence="12">
    <location>
        <position position="151"/>
    </location>
</feature>
<feature type="sequence variant" id="VAR_023076" description="In dbSNP:rs6468171." evidence="4 5">
    <original>Q</original>
    <variation>R</variation>
    <location>
        <position position="277"/>
    </location>
</feature>
<feature type="sequence conflict" description="In Ref. 2; BAB55134." evidence="6" ref="2">
    <original>S</original>
    <variation>L</variation>
    <location>
        <position position="200"/>
    </location>
</feature>
<feature type="sequence conflict" description="In Ref. 4; AAH39740." evidence="6" ref="4">
    <original>A</original>
    <variation>V</variation>
    <location>
        <position position="281"/>
    </location>
</feature>
<reference key="1">
    <citation type="submission" date="2000-03" db="EMBL/GenBank/DDBJ databases">
        <authorList>
            <person name="Mao Y."/>
            <person name="Xie Y."/>
            <person name="Zhou Z."/>
            <person name="Zhao W."/>
            <person name="Zhao S."/>
            <person name="Wang W."/>
            <person name="Huang Y."/>
            <person name="Wang S."/>
            <person name="Tang R."/>
            <person name="Chen X."/>
            <person name="Wu C."/>
        </authorList>
    </citation>
    <scope>NUCLEOTIDE SEQUENCE [MRNA]</scope>
    <scope>VARIANT ARG-277</scope>
</reference>
<reference key="2">
    <citation type="journal article" date="2004" name="Nat. Genet.">
        <title>Complete sequencing and characterization of 21,243 full-length human cDNAs.</title>
        <authorList>
            <person name="Ota T."/>
            <person name="Suzuki Y."/>
            <person name="Nishikawa T."/>
            <person name="Otsuki T."/>
            <person name="Sugiyama T."/>
            <person name="Irie R."/>
            <person name="Wakamatsu A."/>
            <person name="Hayashi K."/>
            <person name="Sato H."/>
            <person name="Nagai K."/>
            <person name="Kimura K."/>
            <person name="Makita H."/>
            <person name="Sekine M."/>
            <person name="Obayashi M."/>
            <person name="Nishi T."/>
            <person name="Shibahara T."/>
            <person name="Tanaka T."/>
            <person name="Ishii S."/>
            <person name="Yamamoto J."/>
            <person name="Saito K."/>
            <person name="Kawai Y."/>
            <person name="Isono Y."/>
            <person name="Nakamura Y."/>
            <person name="Nagahari K."/>
            <person name="Murakami K."/>
            <person name="Yasuda T."/>
            <person name="Iwayanagi T."/>
            <person name="Wagatsuma M."/>
            <person name="Shiratori A."/>
            <person name="Sudo H."/>
            <person name="Hosoiri T."/>
            <person name="Kaku Y."/>
            <person name="Kodaira H."/>
            <person name="Kondo H."/>
            <person name="Sugawara M."/>
            <person name="Takahashi M."/>
            <person name="Kanda K."/>
            <person name="Yokoi T."/>
            <person name="Furuya T."/>
            <person name="Kikkawa E."/>
            <person name="Omura Y."/>
            <person name="Abe K."/>
            <person name="Kamihara K."/>
            <person name="Katsuta N."/>
            <person name="Sato K."/>
            <person name="Tanikawa M."/>
            <person name="Yamazaki M."/>
            <person name="Ninomiya K."/>
            <person name="Ishibashi T."/>
            <person name="Yamashita H."/>
            <person name="Murakawa K."/>
            <person name="Fujimori K."/>
            <person name="Tanai H."/>
            <person name="Kimata M."/>
            <person name="Watanabe M."/>
            <person name="Hiraoka S."/>
            <person name="Chiba Y."/>
            <person name="Ishida S."/>
            <person name="Ono Y."/>
            <person name="Takiguchi S."/>
            <person name="Watanabe S."/>
            <person name="Yosida M."/>
            <person name="Hotuta T."/>
            <person name="Kusano J."/>
            <person name="Kanehori K."/>
            <person name="Takahashi-Fujii A."/>
            <person name="Hara H."/>
            <person name="Tanase T.-O."/>
            <person name="Nomura Y."/>
            <person name="Togiya S."/>
            <person name="Komai F."/>
            <person name="Hara R."/>
            <person name="Takeuchi K."/>
            <person name="Arita M."/>
            <person name="Imose N."/>
            <person name="Musashino K."/>
            <person name="Yuuki H."/>
            <person name="Oshima A."/>
            <person name="Sasaki N."/>
            <person name="Aotsuka S."/>
            <person name="Yoshikawa Y."/>
            <person name="Matsunawa H."/>
            <person name="Ichihara T."/>
            <person name="Shiohata N."/>
            <person name="Sano S."/>
            <person name="Moriya S."/>
            <person name="Momiyama H."/>
            <person name="Satoh N."/>
            <person name="Takami S."/>
            <person name="Terashima Y."/>
            <person name="Suzuki O."/>
            <person name="Nakagawa S."/>
            <person name="Senoh A."/>
            <person name="Mizoguchi H."/>
            <person name="Goto Y."/>
            <person name="Shimizu F."/>
            <person name="Wakebe H."/>
            <person name="Hishigaki H."/>
            <person name="Watanabe T."/>
            <person name="Sugiyama A."/>
            <person name="Takemoto M."/>
            <person name="Kawakami B."/>
            <person name="Yamazaki M."/>
            <person name="Watanabe K."/>
            <person name="Kumagai A."/>
            <person name="Itakura S."/>
            <person name="Fukuzumi Y."/>
            <person name="Fujimori Y."/>
            <person name="Komiyama M."/>
            <person name="Tashiro H."/>
            <person name="Tanigami A."/>
            <person name="Fujiwara T."/>
            <person name="Ono T."/>
            <person name="Yamada K."/>
            <person name="Fujii Y."/>
            <person name="Ozaki K."/>
            <person name="Hirao M."/>
            <person name="Ohmori Y."/>
            <person name="Kawabata A."/>
            <person name="Hikiji T."/>
            <person name="Kobatake N."/>
            <person name="Inagaki H."/>
            <person name="Ikema Y."/>
            <person name="Okamoto S."/>
            <person name="Okitani R."/>
            <person name="Kawakami T."/>
            <person name="Noguchi S."/>
            <person name="Itoh T."/>
            <person name="Shigeta K."/>
            <person name="Senba T."/>
            <person name="Matsumura K."/>
            <person name="Nakajima Y."/>
            <person name="Mizuno T."/>
            <person name="Morinaga M."/>
            <person name="Sasaki M."/>
            <person name="Togashi T."/>
            <person name="Oyama M."/>
            <person name="Hata H."/>
            <person name="Watanabe M."/>
            <person name="Komatsu T."/>
            <person name="Mizushima-Sugano J."/>
            <person name="Satoh T."/>
            <person name="Shirai Y."/>
            <person name="Takahashi Y."/>
            <person name="Nakagawa K."/>
            <person name="Okumura K."/>
            <person name="Nagase T."/>
            <person name="Nomura N."/>
            <person name="Kikuchi H."/>
            <person name="Masuho Y."/>
            <person name="Yamashita R."/>
            <person name="Nakai K."/>
            <person name="Yada T."/>
            <person name="Nakamura Y."/>
            <person name="Ohara O."/>
            <person name="Isogai T."/>
            <person name="Sugano S."/>
        </authorList>
    </citation>
    <scope>NUCLEOTIDE SEQUENCE [LARGE SCALE MRNA]</scope>
</reference>
<reference key="3">
    <citation type="submission" date="2005-09" db="EMBL/GenBank/DDBJ databases">
        <authorList>
            <person name="Mural R.J."/>
            <person name="Istrail S."/>
            <person name="Sutton G.G."/>
            <person name="Florea L."/>
            <person name="Halpern A.L."/>
            <person name="Mobarry C.M."/>
            <person name="Lippert R."/>
            <person name="Walenz B."/>
            <person name="Shatkay H."/>
            <person name="Dew I."/>
            <person name="Miller J.R."/>
            <person name="Flanigan M.J."/>
            <person name="Edwards N.J."/>
            <person name="Bolanos R."/>
            <person name="Fasulo D."/>
            <person name="Halldorsson B.V."/>
            <person name="Hannenhalli S."/>
            <person name="Turner R."/>
            <person name="Yooseph S."/>
            <person name="Lu F."/>
            <person name="Nusskern D.R."/>
            <person name="Shue B.C."/>
            <person name="Zheng X.H."/>
            <person name="Zhong F."/>
            <person name="Delcher A.L."/>
            <person name="Huson D.H."/>
            <person name="Kravitz S.A."/>
            <person name="Mouchard L."/>
            <person name="Reinert K."/>
            <person name="Remington K.A."/>
            <person name="Clark A.G."/>
            <person name="Waterman M.S."/>
            <person name="Eichler E.E."/>
            <person name="Adams M.D."/>
            <person name="Hunkapiller M.W."/>
            <person name="Myers E.W."/>
            <person name="Venter J.C."/>
        </authorList>
    </citation>
    <scope>NUCLEOTIDE SEQUENCE [LARGE SCALE GENOMIC DNA]</scope>
</reference>
<reference key="4">
    <citation type="journal article" date="2004" name="Genome Res.">
        <title>The status, quality, and expansion of the NIH full-length cDNA project: the Mammalian Gene Collection (MGC).</title>
        <authorList>
            <consortium name="The MGC Project Team"/>
        </authorList>
    </citation>
    <scope>NUCLEOTIDE SEQUENCE [LARGE SCALE MRNA]</scope>
    <scope>VARIANT ARG-277</scope>
    <source>
        <tissue>Brain</tissue>
        <tissue>Testis</tissue>
        <tissue>Uterus</tissue>
    </source>
</reference>
<reference key="5">
    <citation type="journal article" date="2002" name="Curr. Biol.">
        <title>Directed proteomic analysis of the human nucleolus.</title>
        <authorList>
            <person name="Andersen J.S."/>
            <person name="Lyon C.E."/>
            <person name="Fox A.H."/>
            <person name="Leung A.K.L."/>
            <person name="Lam Y.W."/>
            <person name="Steen H."/>
            <person name="Mann M."/>
            <person name="Lamond A.I."/>
        </authorList>
    </citation>
    <scope>IDENTIFICATION BY MASS SPECTROMETRY</scope>
    <scope>SUBCELLULAR LOCATION</scope>
</reference>
<reference key="6">
    <citation type="journal article" date="2002" name="Mol. Biol. Cell">
        <title>Functional proteomic analysis of human nucleolus.</title>
        <authorList>
            <person name="Scherl A."/>
            <person name="Coute Y."/>
            <person name="Deon C."/>
            <person name="Calle A."/>
            <person name="Kindbeiter K."/>
            <person name="Sanchez J.-C."/>
            <person name="Greco A."/>
            <person name="Hochstrasser D.F."/>
            <person name="Diaz J.-J."/>
        </authorList>
    </citation>
    <scope>SUBCELLULAR LOCATION [LARGE SCALE ANALYSIS]</scope>
    <source>
        <tissue>Cervix carcinoma</tissue>
    </source>
</reference>
<reference key="7">
    <citation type="journal article" date="2006" name="Cell">
        <title>Global, in vivo, and site-specific phosphorylation dynamics in signaling networks.</title>
        <authorList>
            <person name="Olsen J.V."/>
            <person name="Blagoev B."/>
            <person name="Gnad F."/>
            <person name="Macek B."/>
            <person name="Kumar C."/>
            <person name="Mortensen P."/>
            <person name="Mann M."/>
        </authorList>
    </citation>
    <scope>PHOSPHORYLATION [LARGE SCALE ANALYSIS] AT SER-229 AND SER-232</scope>
    <scope>IDENTIFICATION BY MASS SPECTROMETRY [LARGE SCALE ANALYSIS]</scope>
    <source>
        <tissue>Cervix carcinoma</tissue>
    </source>
</reference>
<reference key="8">
    <citation type="journal article" date="2008" name="Proc. Natl. Acad. Sci. U.S.A.">
        <title>A quantitative atlas of mitotic phosphorylation.</title>
        <authorList>
            <person name="Dephoure N."/>
            <person name="Zhou C."/>
            <person name="Villen J."/>
            <person name="Beausoleil S.A."/>
            <person name="Bakalarski C.E."/>
            <person name="Elledge S.J."/>
            <person name="Gygi S.P."/>
        </authorList>
    </citation>
    <scope>IDENTIFICATION BY MASS SPECTROMETRY [LARGE SCALE ANALYSIS]</scope>
    <source>
        <tissue>Cervix carcinoma</tissue>
    </source>
</reference>
<reference key="9">
    <citation type="journal article" date="2009" name="Anal. Chem.">
        <title>Lys-N and trypsin cover complementary parts of the phosphoproteome in a refined SCX-based approach.</title>
        <authorList>
            <person name="Gauci S."/>
            <person name="Helbig A.O."/>
            <person name="Slijper M."/>
            <person name="Krijgsveld J."/>
            <person name="Heck A.J."/>
            <person name="Mohammed S."/>
        </authorList>
    </citation>
    <scope>ACETYLATION [LARGE SCALE ANALYSIS] AT MET-1</scope>
    <scope>IDENTIFICATION BY MASS SPECTROMETRY [LARGE SCALE ANALYSIS]</scope>
</reference>
<reference key="10">
    <citation type="journal article" date="2010" name="Sci. Signal.">
        <title>Quantitative phosphoproteomics reveals widespread full phosphorylation site occupancy during mitosis.</title>
        <authorList>
            <person name="Olsen J.V."/>
            <person name="Vermeulen M."/>
            <person name="Santamaria A."/>
            <person name="Kumar C."/>
            <person name="Miller M.L."/>
            <person name="Jensen L.J."/>
            <person name="Gnad F."/>
            <person name="Cox J."/>
            <person name="Jensen T.S."/>
            <person name="Nigg E.A."/>
            <person name="Brunak S."/>
            <person name="Mann M."/>
        </authorList>
    </citation>
    <scope>PHOSPHORYLATION [LARGE SCALE ANALYSIS] AT SER-229 AND SER-232</scope>
    <scope>IDENTIFICATION BY MASS SPECTROMETRY [LARGE SCALE ANALYSIS]</scope>
    <source>
        <tissue>Cervix carcinoma</tissue>
    </source>
</reference>
<reference key="11">
    <citation type="journal article" date="2011" name="Sci. Signal.">
        <title>System-wide temporal characterization of the proteome and phosphoproteome of human embryonic stem cell differentiation.</title>
        <authorList>
            <person name="Rigbolt K.T."/>
            <person name="Prokhorova T.A."/>
            <person name="Akimov V."/>
            <person name="Henningsen J."/>
            <person name="Johansen P.T."/>
            <person name="Kratchmarova I."/>
            <person name="Kassem M."/>
            <person name="Mann M."/>
            <person name="Olsen J.V."/>
            <person name="Blagoev B."/>
        </authorList>
    </citation>
    <scope>PHOSPHORYLATION [LARGE SCALE ANALYSIS] AT SER-197; SER-200; SER-229 AND SER-232</scope>
    <scope>IDENTIFICATION BY MASS SPECTROMETRY [LARGE SCALE ANALYSIS]</scope>
</reference>
<reference key="12">
    <citation type="journal article" date="2012" name="Mol. Cell. Proteomics">
        <title>Comparative large-scale characterisation of plant vs. mammal proteins reveals similar and idiosyncratic N-alpha acetylation features.</title>
        <authorList>
            <person name="Bienvenut W.V."/>
            <person name="Sumpton D."/>
            <person name="Martinez A."/>
            <person name="Lilla S."/>
            <person name="Espagne C."/>
            <person name="Meinnel T."/>
            <person name="Giglione C."/>
        </authorList>
    </citation>
    <scope>ACETYLATION [LARGE SCALE ANALYSIS] AT MET-1</scope>
    <scope>IDENTIFICATION BY MASS SPECTROMETRY [LARGE SCALE ANALYSIS]</scope>
</reference>
<reference key="13">
    <citation type="journal article" date="2017" name="Nat. Struct. Mol. Biol.">
        <title>Site-specific mapping of the human SUMO proteome reveals co-modification with phosphorylation.</title>
        <authorList>
            <person name="Hendriks I.A."/>
            <person name="Lyon D."/>
            <person name="Young C."/>
            <person name="Jensen L.J."/>
            <person name="Vertegaal A.C."/>
            <person name="Nielsen M.L."/>
        </authorList>
    </citation>
    <scope>SUMOYLATION [LARGE SCALE ANALYSIS] AT LYS-55 AND LYS-151</scope>
    <scope>IDENTIFICATION BY MASS SPECTROMETRY [LARGE SCALE ANALYSIS]</scope>
</reference>
<keyword id="KW-0002">3D-structure</keyword>
<keyword id="KW-0007">Acetylation</keyword>
<keyword id="KW-1017">Isopeptide bond</keyword>
<keyword id="KW-0539">Nucleus</keyword>
<keyword id="KW-0597">Phosphoprotein</keyword>
<keyword id="KW-1267">Proteomics identification</keyword>
<keyword id="KW-1185">Reference proteome</keyword>
<keyword id="KW-0832">Ubl conjugation</keyword>